<sequence>MDIFHAIILGIVEGLTEFLPVSSTGHLILVSELLGIKQDDFHKTFEISIQLGSILAVLALFRERLFSGVDIWLKLAVAFIPTGALGFLLYKHVKALFAPSTVAYALILGGIVFLVLEWLHKDKEYKINSVESIGYKEALAIGFFQALAMIPGTSRSGSTIVGGLILGLNRKVAAEFSFLLALPTMFIATGYDLYKNSHTLSIENLSALGVGFVVAFIFAMIAVKGFLKFISRFNFVPFGIYRIILGIIFLFYLDLI</sequence>
<feature type="chain" id="PRO_0000151240" description="Undecaprenyl-diphosphatase">
    <location>
        <begin position="1"/>
        <end position="256"/>
    </location>
</feature>
<feature type="transmembrane region" description="Helical" evidence="1">
    <location>
        <begin position="1"/>
        <end position="21"/>
    </location>
</feature>
<feature type="transmembrane region" description="Helical" evidence="1">
    <location>
        <begin position="41"/>
        <end position="61"/>
    </location>
</feature>
<feature type="transmembrane region" description="Helical" evidence="1">
    <location>
        <begin position="69"/>
        <end position="89"/>
    </location>
</feature>
<feature type="transmembrane region" description="Helical" evidence="1">
    <location>
        <begin position="96"/>
        <end position="116"/>
    </location>
</feature>
<feature type="transmembrane region" description="Helical" evidence="1">
    <location>
        <begin position="172"/>
        <end position="192"/>
    </location>
</feature>
<feature type="transmembrane region" description="Helical" evidence="1">
    <location>
        <begin position="207"/>
        <end position="227"/>
    </location>
</feature>
<feature type="transmembrane region" description="Helical" evidence="1">
    <location>
        <begin position="233"/>
        <end position="253"/>
    </location>
</feature>
<comment type="function">
    <text evidence="1">Catalyzes the dephosphorylation of undecaprenyl diphosphate (UPP). Confers resistance to bacitracin.</text>
</comment>
<comment type="catalytic activity">
    <reaction evidence="1">
        <text>di-trans,octa-cis-undecaprenyl diphosphate + H2O = di-trans,octa-cis-undecaprenyl phosphate + phosphate + H(+)</text>
        <dbReference type="Rhea" id="RHEA:28094"/>
        <dbReference type="ChEBI" id="CHEBI:15377"/>
        <dbReference type="ChEBI" id="CHEBI:15378"/>
        <dbReference type="ChEBI" id="CHEBI:43474"/>
        <dbReference type="ChEBI" id="CHEBI:58405"/>
        <dbReference type="ChEBI" id="CHEBI:60392"/>
        <dbReference type="EC" id="3.6.1.27"/>
    </reaction>
</comment>
<comment type="subcellular location">
    <subcellularLocation>
        <location evidence="1">Cell inner membrane</location>
        <topology evidence="1">Multi-pass membrane protein</topology>
    </subcellularLocation>
</comment>
<comment type="miscellaneous">
    <text>Bacitracin is thought to be involved in the inhibition of peptidoglycan synthesis by sequestering undecaprenyl diphosphate, thereby reducing the pool of lipid carrier available.</text>
</comment>
<comment type="similarity">
    <text evidence="1">Belongs to the UppP family.</text>
</comment>
<dbReference type="EC" id="3.6.1.27" evidence="1"/>
<dbReference type="EMBL" id="BX571660">
    <property type="protein sequence ID" value="CAE10368.1"/>
    <property type="molecule type" value="Genomic_DNA"/>
</dbReference>
<dbReference type="RefSeq" id="WP_011139154.1">
    <property type="nucleotide sequence ID" value="NC_005090.1"/>
</dbReference>
<dbReference type="SMR" id="Q7M8Z9"/>
<dbReference type="STRING" id="273121.WS1290"/>
<dbReference type="KEGG" id="wsu:WS1290"/>
<dbReference type="eggNOG" id="COG1968">
    <property type="taxonomic scope" value="Bacteria"/>
</dbReference>
<dbReference type="HOGENOM" id="CLU_060296_2_0_7"/>
<dbReference type="Proteomes" id="UP000000422">
    <property type="component" value="Chromosome"/>
</dbReference>
<dbReference type="GO" id="GO:0005886">
    <property type="term" value="C:plasma membrane"/>
    <property type="evidence" value="ECO:0007669"/>
    <property type="project" value="UniProtKB-SubCell"/>
</dbReference>
<dbReference type="GO" id="GO:0050380">
    <property type="term" value="F:undecaprenyl-diphosphatase activity"/>
    <property type="evidence" value="ECO:0007669"/>
    <property type="project" value="UniProtKB-UniRule"/>
</dbReference>
<dbReference type="GO" id="GO:0071555">
    <property type="term" value="P:cell wall organization"/>
    <property type="evidence" value="ECO:0007669"/>
    <property type="project" value="UniProtKB-KW"/>
</dbReference>
<dbReference type="GO" id="GO:0009252">
    <property type="term" value="P:peptidoglycan biosynthetic process"/>
    <property type="evidence" value="ECO:0007669"/>
    <property type="project" value="UniProtKB-KW"/>
</dbReference>
<dbReference type="GO" id="GO:0008360">
    <property type="term" value="P:regulation of cell shape"/>
    <property type="evidence" value="ECO:0007669"/>
    <property type="project" value="UniProtKB-KW"/>
</dbReference>
<dbReference type="GO" id="GO:0046677">
    <property type="term" value="P:response to antibiotic"/>
    <property type="evidence" value="ECO:0007669"/>
    <property type="project" value="UniProtKB-UniRule"/>
</dbReference>
<dbReference type="HAMAP" id="MF_01006">
    <property type="entry name" value="Undec_diphosphatase"/>
    <property type="match status" value="1"/>
</dbReference>
<dbReference type="InterPro" id="IPR003824">
    <property type="entry name" value="UppP"/>
</dbReference>
<dbReference type="NCBIfam" id="NF001389">
    <property type="entry name" value="PRK00281.1-2"/>
    <property type="match status" value="1"/>
</dbReference>
<dbReference type="NCBIfam" id="NF001390">
    <property type="entry name" value="PRK00281.1-4"/>
    <property type="match status" value="1"/>
</dbReference>
<dbReference type="NCBIfam" id="TIGR00753">
    <property type="entry name" value="undec_PP_bacA"/>
    <property type="match status" value="1"/>
</dbReference>
<dbReference type="PANTHER" id="PTHR30622">
    <property type="entry name" value="UNDECAPRENYL-DIPHOSPHATASE"/>
    <property type="match status" value="1"/>
</dbReference>
<dbReference type="PANTHER" id="PTHR30622:SF3">
    <property type="entry name" value="UNDECAPRENYL-DIPHOSPHATASE"/>
    <property type="match status" value="1"/>
</dbReference>
<dbReference type="Pfam" id="PF02673">
    <property type="entry name" value="BacA"/>
    <property type="match status" value="1"/>
</dbReference>
<proteinExistence type="inferred from homology"/>
<organism>
    <name type="scientific">Wolinella succinogenes (strain ATCC 29543 / DSM 1740 / CCUG 13145 / JCM 31913 / LMG 7466 / NCTC 11488 / FDC 602W)</name>
    <name type="common">Vibrio succinogenes</name>
    <dbReference type="NCBI Taxonomy" id="273121"/>
    <lineage>
        <taxon>Bacteria</taxon>
        <taxon>Pseudomonadati</taxon>
        <taxon>Campylobacterota</taxon>
        <taxon>Epsilonproteobacteria</taxon>
        <taxon>Campylobacterales</taxon>
        <taxon>Helicobacteraceae</taxon>
        <taxon>Wolinella</taxon>
    </lineage>
</organism>
<reference key="1">
    <citation type="journal article" date="2003" name="Proc. Natl. Acad. Sci. U.S.A.">
        <title>Complete genome sequence and analysis of Wolinella succinogenes.</title>
        <authorList>
            <person name="Baar C."/>
            <person name="Eppinger M."/>
            <person name="Raddatz G."/>
            <person name="Simon J."/>
            <person name="Lanz C."/>
            <person name="Klimmek O."/>
            <person name="Nandakumar R."/>
            <person name="Gross R."/>
            <person name="Rosinus A."/>
            <person name="Keller H."/>
            <person name="Jagtap P."/>
            <person name="Linke B."/>
            <person name="Meyer F."/>
            <person name="Lederer H."/>
            <person name="Schuster S.C."/>
        </authorList>
    </citation>
    <scope>NUCLEOTIDE SEQUENCE [LARGE SCALE GENOMIC DNA]</scope>
    <source>
        <strain>ATCC 29543 / DSM 1740 / CCUG 13145 / JCM 31913 / LMG 7466 / NCTC 11488 / FDC 602W</strain>
    </source>
</reference>
<keyword id="KW-0046">Antibiotic resistance</keyword>
<keyword id="KW-0997">Cell inner membrane</keyword>
<keyword id="KW-1003">Cell membrane</keyword>
<keyword id="KW-0133">Cell shape</keyword>
<keyword id="KW-0961">Cell wall biogenesis/degradation</keyword>
<keyword id="KW-0378">Hydrolase</keyword>
<keyword id="KW-0472">Membrane</keyword>
<keyword id="KW-0573">Peptidoglycan synthesis</keyword>
<keyword id="KW-1185">Reference proteome</keyword>
<keyword id="KW-0812">Transmembrane</keyword>
<keyword id="KW-1133">Transmembrane helix</keyword>
<protein>
    <recommendedName>
        <fullName evidence="1">Undecaprenyl-diphosphatase</fullName>
        <ecNumber evidence="1">3.6.1.27</ecNumber>
    </recommendedName>
    <alternativeName>
        <fullName evidence="1">Bacitracin resistance protein</fullName>
    </alternativeName>
    <alternativeName>
        <fullName evidence="1">Undecaprenyl pyrophosphate phosphatase</fullName>
    </alternativeName>
</protein>
<name>UPPP_WOLSU</name>
<gene>
    <name evidence="1" type="primary">uppP</name>
    <name type="synonym">bacA</name>
    <name type="synonym">upk</name>
    <name type="ordered locus">WS1290</name>
</gene>
<evidence type="ECO:0000255" key="1">
    <source>
        <dbReference type="HAMAP-Rule" id="MF_01006"/>
    </source>
</evidence>
<accession>Q7M8Z9</accession>